<keyword id="KW-1185">Reference proteome</keyword>
<keyword id="KW-0687">Ribonucleoprotein</keyword>
<keyword id="KW-0689">Ribosomal protein</keyword>
<reference key="1">
    <citation type="journal article" date="2003" name="J. Bacteriol.">
        <title>Complete genome sequence of the ammonia-oxidizing bacterium and obligate chemolithoautotroph Nitrosomonas europaea.</title>
        <authorList>
            <person name="Chain P."/>
            <person name="Lamerdin J.E."/>
            <person name="Larimer F.W."/>
            <person name="Regala W."/>
            <person name="Lao V."/>
            <person name="Land M.L."/>
            <person name="Hauser L."/>
            <person name="Hooper A.B."/>
            <person name="Klotz M.G."/>
            <person name="Norton J."/>
            <person name="Sayavedra-Soto L.A."/>
            <person name="Arciero D.M."/>
            <person name="Hommes N.G."/>
            <person name="Whittaker M.M."/>
            <person name="Arp D.J."/>
        </authorList>
    </citation>
    <scope>NUCLEOTIDE SEQUENCE [LARGE SCALE GENOMIC DNA]</scope>
    <source>
        <strain>ATCC 19718 / CIP 103999 / KCTC 2705 / NBRC 14298</strain>
    </source>
</reference>
<gene>
    <name evidence="1" type="primary">rpsP</name>
    <name type="ordered locus">NE1671</name>
</gene>
<evidence type="ECO:0000255" key="1">
    <source>
        <dbReference type="HAMAP-Rule" id="MF_00385"/>
    </source>
</evidence>
<evidence type="ECO:0000305" key="2"/>
<proteinExistence type="inferred from homology"/>
<organism>
    <name type="scientific">Nitrosomonas europaea (strain ATCC 19718 / CIP 103999 / KCTC 2705 / NBRC 14298)</name>
    <dbReference type="NCBI Taxonomy" id="228410"/>
    <lineage>
        <taxon>Bacteria</taxon>
        <taxon>Pseudomonadati</taxon>
        <taxon>Pseudomonadota</taxon>
        <taxon>Betaproteobacteria</taxon>
        <taxon>Nitrosomonadales</taxon>
        <taxon>Nitrosomonadaceae</taxon>
        <taxon>Nitrosomonas</taxon>
    </lineage>
</organism>
<protein>
    <recommendedName>
        <fullName evidence="1">Small ribosomal subunit protein bS16</fullName>
    </recommendedName>
    <alternativeName>
        <fullName evidence="2">30S ribosomal protein S16</fullName>
    </alternativeName>
</protein>
<sequence length="89" mass="10206">MVVVRLARGGAKKRPFYSMVVADSRNRRDGKFIERVGFYNPRATGGEESLRIQMDRLTYWQSKGAQLSDTVSRLVKQFGRQQKAAQPQE</sequence>
<accession>Q82U38</accession>
<dbReference type="EMBL" id="AL954747">
    <property type="protein sequence ID" value="CAD85582.1"/>
    <property type="molecule type" value="Genomic_DNA"/>
</dbReference>
<dbReference type="RefSeq" id="WP_011112228.1">
    <property type="nucleotide sequence ID" value="NC_004757.1"/>
</dbReference>
<dbReference type="SMR" id="Q82U38"/>
<dbReference type="STRING" id="228410.NE1671"/>
<dbReference type="GeneID" id="87104835"/>
<dbReference type="KEGG" id="neu:NE1671"/>
<dbReference type="eggNOG" id="COG0228">
    <property type="taxonomic scope" value="Bacteria"/>
</dbReference>
<dbReference type="HOGENOM" id="CLU_100590_5_1_4"/>
<dbReference type="OrthoDB" id="9807878at2"/>
<dbReference type="PhylomeDB" id="Q82U38"/>
<dbReference type="Proteomes" id="UP000001416">
    <property type="component" value="Chromosome"/>
</dbReference>
<dbReference type="GO" id="GO:0005737">
    <property type="term" value="C:cytoplasm"/>
    <property type="evidence" value="ECO:0007669"/>
    <property type="project" value="UniProtKB-ARBA"/>
</dbReference>
<dbReference type="GO" id="GO:0015935">
    <property type="term" value="C:small ribosomal subunit"/>
    <property type="evidence" value="ECO:0007669"/>
    <property type="project" value="TreeGrafter"/>
</dbReference>
<dbReference type="GO" id="GO:0003735">
    <property type="term" value="F:structural constituent of ribosome"/>
    <property type="evidence" value="ECO:0007669"/>
    <property type="project" value="InterPro"/>
</dbReference>
<dbReference type="GO" id="GO:0006412">
    <property type="term" value="P:translation"/>
    <property type="evidence" value="ECO:0007669"/>
    <property type="project" value="UniProtKB-UniRule"/>
</dbReference>
<dbReference type="Gene3D" id="3.30.1320.10">
    <property type="match status" value="1"/>
</dbReference>
<dbReference type="HAMAP" id="MF_00385">
    <property type="entry name" value="Ribosomal_bS16"/>
    <property type="match status" value="1"/>
</dbReference>
<dbReference type="InterPro" id="IPR000307">
    <property type="entry name" value="Ribosomal_bS16"/>
</dbReference>
<dbReference type="InterPro" id="IPR020592">
    <property type="entry name" value="Ribosomal_bS16_CS"/>
</dbReference>
<dbReference type="InterPro" id="IPR023803">
    <property type="entry name" value="Ribosomal_bS16_dom_sf"/>
</dbReference>
<dbReference type="NCBIfam" id="TIGR00002">
    <property type="entry name" value="S16"/>
    <property type="match status" value="1"/>
</dbReference>
<dbReference type="PANTHER" id="PTHR12919">
    <property type="entry name" value="30S RIBOSOMAL PROTEIN S16"/>
    <property type="match status" value="1"/>
</dbReference>
<dbReference type="PANTHER" id="PTHR12919:SF20">
    <property type="entry name" value="SMALL RIBOSOMAL SUBUNIT PROTEIN BS16M"/>
    <property type="match status" value="1"/>
</dbReference>
<dbReference type="Pfam" id="PF00886">
    <property type="entry name" value="Ribosomal_S16"/>
    <property type="match status" value="1"/>
</dbReference>
<dbReference type="SUPFAM" id="SSF54565">
    <property type="entry name" value="Ribosomal protein S16"/>
    <property type="match status" value="1"/>
</dbReference>
<dbReference type="PROSITE" id="PS00732">
    <property type="entry name" value="RIBOSOMAL_S16"/>
    <property type="match status" value="1"/>
</dbReference>
<name>RS16_NITEU</name>
<comment type="similarity">
    <text evidence="1">Belongs to the bacterial ribosomal protein bS16 family.</text>
</comment>
<feature type="chain" id="PRO_0000167217" description="Small ribosomal subunit protein bS16">
    <location>
        <begin position="1"/>
        <end position="89"/>
    </location>
</feature>